<comment type="function">
    <text evidence="1">Required for maturation of 30S ribosomal subunits.</text>
</comment>
<comment type="subcellular location">
    <subcellularLocation>
        <location evidence="1">Cytoplasm</location>
    </subcellularLocation>
</comment>
<comment type="similarity">
    <text evidence="1">Belongs to the RimP family.</text>
</comment>
<reference key="1">
    <citation type="submission" date="2007-04" db="EMBL/GenBank/DDBJ databases">
        <title>Complete sequence of Shewanella putrefaciens CN-32.</title>
        <authorList>
            <consortium name="US DOE Joint Genome Institute"/>
            <person name="Copeland A."/>
            <person name="Lucas S."/>
            <person name="Lapidus A."/>
            <person name="Barry K."/>
            <person name="Detter J.C."/>
            <person name="Glavina del Rio T."/>
            <person name="Hammon N."/>
            <person name="Israni S."/>
            <person name="Dalin E."/>
            <person name="Tice H."/>
            <person name="Pitluck S."/>
            <person name="Chain P."/>
            <person name="Malfatti S."/>
            <person name="Shin M."/>
            <person name="Vergez L."/>
            <person name="Schmutz J."/>
            <person name="Larimer F."/>
            <person name="Land M."/>
            <person name="Hauser L."/>
            <person name="Kyrpides N."/>
            <person name="Mikhailova N."/>
            <person name="Romine M.F."/>
            <person name="Fredrickson J."/>
            <person name="Tiedje J."/>
            <person name="Richardson P."/>
        </authorList>
    </citation>
    <scope>NUCLEOTIDE SEQUENCE [LARGE SCALE GENOMIC DNA]</scope>
    <source>
        <strain>CN-32 / ATCC BAA-453</strain>
    </source>
</reference>
<accession>A4Y9C2</accession>
<organism>
    <name type="scientific">Shewanella putrefaciens (strain CN-32 / ATCC BAA-453)</name>
    <dbReference type="NCBI Taxonomy" id="319224"/>
    <lineage>
        <taxon>Bacteria</taxon>
        <taxon>Pseudomonadati</taxon>
        <taxon>Pseudomonadota</taxon>
        <taxon>Gammaproteobacteria</taxon>
        <taxon>Alteromonadales</taxon>
        <taxon>Shewanellaceae</taxon>
        <taxon>Shewanella</taxon>
    </lineage>
</organism>
<protein>
    <recommendedName>
        <fullName evidence="1">Ribosome maturation factor RimP</fullName>
    </recommendedName>
</protein>
<keyword id="KW-0963">Cytoplasm</keyword>
<keyword id="KW-0690">Ribosome biogenesis</keyword>
<feature type="chain" id="PRO_1000064770" description="Ribosome maturation factor RimP">
    <location>
        <begin position="1"/>
        <end position="151"/>
    </location>
</feature>
<name>RIMP_SHEPC</name>
<dbReference type="EMBL" id="CP000681">
    <property type="protein sequence ID" value="ABP76555.1"/>
    <property type="molecule type" value="Genomic_DNA"/>
</dbReference>
<dbReference type="SMR" id="A4Y9C2"/>
<dbReference type="STRING" id="319224.Sputcn32_2836"/>
<dbReference type="KEGG" id="spc:Sputcn32_2836"/>
<dbReference type="eggNOG" id="COG0779">
    <property type="taxonomic scope" value="Bacteria"/>
</dbReference>
<dbReference type="HOGENOM" id="CLU_070525_1_1_6"/>
<dbReference type="GO" id="GO:0005829">
    <property type="term" value="C:cytosol"/>
    <property type="evidence" value="ECO:0007669"/>
    <property type="project" value="TreeGrafter"/>
</dbReference>
<dbReference type="GO" id="GO:0000028">
    <property type="term" value="P:ribosomal small subunit assembly"/>
    <property type="evidence" value="ECO:0007669"/>
    <property type="project" value="TreeGrafter"/>
</dbReference>
<dbReference type="GO" id="GO:0006412">
    <property type="term" value="P:translation"/>
    <property type="evidence" value="ECO:0007669"/>
    <property type="project" value="TreeGrafter"/>
</dbReference>
<dbReference type="CDD" id="cd01734">
    <property type="entry name" value="YlxS_C"/>
    <property type="match status" value="1"/>
</dbReference>
<dbReference type="FunFam" id="3.30.300.70:FF:000001">
    <property type="entry name" value="Ribosome maturation factor RimP"/>
    <property type="match status" value="1"/>
</dbReference>
<dbReference type="Gene3D" id="2.30.30.180">
    <property type="entry name" value="Ribosome maturation factor RimP, C-terminal domain"/>
    <property type="match status" value="1"/>
</dbReference>
<dbReference type="Gene3D" id="3.30.300.70">
    <property type="entry name" value="RimP-like superfamily, N-terminal"/>
    <property type="match status" value="1"/>
</dbReference>
<dbReference type="HAMAP" id="MF_01077">
    <property type="entry name" value="RimP"/>
    <property type="match status" value="1"/>
</dbReference>
<dbReference type="InterPro" id="IPR003728">
    <property type="entry name" value="Ribosome_maturation_RimP"/>
</dbReference>
<dbReference type="InterPro" id="IPR028998">
    <property type="entry name" value="RimP_C"/>
</dbReference>
<dbReference type="InterPro" id="IPR036847">
    <property type="entry name" value="RimP_C_sf"/>
</dbReference>
<dbReference type="InterPro" id="IPR028989">
    <property type="entry name" value="RimP_N"/>
</dbReference>
<dbReference type="InterPro" id="IPR035956">
    <property type="entry name" value="RimP_N_sf"/>
</dbReference>
<dbReference type="NCBIfam" id="NF000927">
    <property type="entry name" value="PRK00092.1-1"/>
    <property type="match status" value="1"/>
</dbReference>
<dbReference type="PANTHER" id="PTHR33867">
    <property type="entry name" value="RIBOSOME MATURATION FACTOR RIMP"/>
    <property type="match status" value="1"/>
</dbReference>
<dbReference type="PANTHER" id="PTHR33867:SF1">
    <property type="entry name" value="RIBOSOME MATURATION FACTOR RIMP"/>
    <property type="match status" value="1"/>
</dbReference>
<dbReference type="Pfam" id="PF17384">
    <property type="entry name" value="DUF150_C"/>
    <property type="match status" value="1"/>
</dbReference>
<dbReference type="Pfam" id="PF02576">
    <property type="entry name" value="RimP_N"/>
    <property type="match status" value="1"/>
</dbReference>
<dbReference type="SUPFAM" id="SSF74942">
    <property type="entry name" value="YhbC-like, C-terminal domain"/>
    <property type="match status" value="1"/>
</dbReference>
<dbReference type="SUPFAM" id="SSF75420">
    <property type="entry name" value="YhbC-like, N-terminal domain"/>
    <property type="match status" value="1"/>
</dbReference>
<proteinExistence type="inferred from homology"/>
<sequence>MATLESRLAEMLKVPVEALGFQLWGIEYVQAGKHSILRVFIDGENGINIEDCANTSRQVSAVLDVEDPISTEYTLEVSSPGVDRPLFTAEQYAAYVGEDVKVQLTMPVAGSRNLKGAITKVEGQMLSLNVNGKELVVALDNIRKGNVIAKF</sequence>
<gene>
    <name evidence="1" type="primary">rimP</name>
    <name type="ordered locus">Sputcn32_2836</name>
</gene>
<evidence type="ECO:0000255" key="1">
    <source>
        <dbReference type="HAMAP-Rule" id="MF_01077"/>
    </source>
</evidence>